<keyword id="KW-0067">ATP-binding</keyword>
<keyword id="KW-0238">DNA-binding</keyword>
<keyword id="KW-0378">Hydrolase</keyword>
<keyword id="KW-0496">Mitochondrion</keyword>
<keyword id="KW-0547">Nucleotide-binding</keyword>
<keyword id="KW-0645">Protease</keyword>
<keyword id="KW-1185">Reference proteome</keyword>
<keyword id="KW-0720">Serine protease</keyword>
<keyword id="KW-0809">Transit peptide</keyword>
<reference key="1">
    <citation type="journal article" date="2007" name="Nat. Biotechnol.">
        <title>Genome sequencing and analysis of the versatile cell factory Aspergillus niger CBS 513.88.</title>
        <authorList>
            <person name="Pel H.J."/>
            <person name="de Winde J.H."/>
            <person name="Archer D.B."/>
            <person name="Dyer P.S."/>
            <person name="Hofmann G."/>
            <person name="Schaap P.J."/>
            <person name="Turner G."/>
            <person name="de Vries R.P."/>
            <person name="Albang R."/>
            <person name="Albermann K."/>
            <person name="Andersen M.R."/>
            <person name="Bendtsen J.D."/>
            <person name="Benen J.A.E."/>
            <person name="van den Berg M."/>
            <person name="Breestraat S."/>
            <person name="Caddick M.X."/>
            <person name="Contreras R."/>
            <person name="Cornell M."/>
            <person name="Coutinho P.M."/>
            <person name="Danchin E.G.J."/>
            <person name="Debets A.J.M."/>
            <person name="Dekker P."/>
            <person name="van Dijck P.W.M."/>
            <person name="van Dijk A."/>
            <person name="Dijkhuizen L."/>
            <person name="Driessen A.J.M."/>
            <person name="d'Enfert C."/>
            <person name="Geysens S."/>
            <person name="Goosen C."/>
            <person name="Groot G.S.P."/>
            <person name="de Groot P.W.J."/>
            <person name="Guillemette T."/>
            <person name="Henrissat B."/>
            <person name="Herweijer M."/>
            <person name="van den Hombergh J.P.T.W."/>
            <person name="van den Hondel C.A.M.J.J."/>
            <person name="van der Heijden R.T.J.M."/>
            <person name="van der Kaaij R.M."/>
            <person name="Klis F.M."/>
            <person name="Kools H.J."/>
            <person name="Kubicek C.P."/>
            <person name="van Kuyk P.A."/>
            <person name="Lauber J."/>
            <person name="Lu X."/>
            <person name="van der Maarel M.J.E.C."/>
            <person name="Meulenberg R."/>
            <person name="Menke H."/>
            <person name="Mortimer M.A."/>
            <person name="Nielsen J."/>
            <person name="Oliver S.G."/>
            <person name="Olsthoorn M."/>
            <person name="Pal K."/>
            <person name="van Peij N.N.M.E."/>
            <person name="Ram A.F.J."/>
            <person name="Rinas U."/>
            <person name="Roubos J.A."/>
            <person name="Sagt C.M.J."/>
            <person name="Schmoll M."/>
            <person name="Sun J."/>
            <person name="Ussery D."/>
            <person name="Varga J."/>
            <person name="Vervecken W."/>
            <person name="van de Vondervoort P.J.J."/>
            <person name="Wedler H."/>
            <person name="Woesten H.A.B."/>
            <person name="Zeng A.-P."/>
            <person name="van Ooyen A.J.J."/>
            <person name="Visser J."/>
            <person name="Stam H."/>
        </authorList>
    </citation>
    <scope>NUCLEOTIDE SEQUENCE [LARGE SCALE GENOMIC DNA]</scope>
    <source>
        <strain>ATCC MYA-4892 / CBS 513.88 / FGSC A1513</strain>
    </source>
</reference>
<evidence type="ECO:0000255" key="1">
    <source>
        <dbReference type="HAMAP-Rule" id="MF_03120"/>
    </source>
</evidence>
<evidence type="ECO:0000255" key="2">
    <source>
        <dbReference type="PROSITE-ProRule" id="PRU01122"/>
    </source>
</evidence>
<evidence type="ECO:0000255" key="3">
    <source>
        <dbReference type="PROSITE-ProRule" id="PRU01123"/>
    </source>
</evidence>
<evidence type="ECO:0000256" key="4">
    <source>
        <dbReference type="SAM" id="MobiDB-lite"/>
    </source>
</evidence>
<gene>
    <name type="primary">pim1</name>
    <name type="ORF">An02g03760</name>
</gene>
<protein>
    <recommendedName>
        <fullName evidence="1">Lon protease homolog, mitochondrial</fullName>
        <ecNumber evidence="1">3.4.21.53</ecNumber>
    </recommendedName>
</protein>
<dbReference type="EC" id="3.4.21.53" evidence="1"/>
<dbReference type="EMBL" id="AM270005">
    <property type="protein sequence ID" value="CAL00590.1"/>
    <property type="molecule type" value="Genomic_DNA"/>
</dbReference>
<dbReference type="RefSeq" id="XP_001399512.1">
    <property type="nucleotide sequence ID" value="XM_001399475.2"/>
</dbReference>
<dbReference type="SMR" id="A2QCJ2"/>
<dbReference type="MEROPS" id="S16.010"/>
<dbReference type="EnsemblFungi" id="CAL00590">
    <property type="protein sequence ID" value="CAL00590"/>
    <property type="gene ID" value="An02g03760"/>
</dbReference>
<dbReference type="GeneID" id="4978863"/>
<dbReference type="KEGG" id="ang:An02g03760"/>
<dbReference type="VEuPathDB" id="FungiDB:An02g03760"/>
<dbReference type="HOGENOM" id="CLU_004109_1_0_1"/>
<dbReference type="Proteomes" id="UP000006706">
    <property type="component" value="Chromosome 4R"/>
</dbReference>
<dbReference type="GO" id="GO:0005759">
    <property type="term" value="C:mitochondrial matrix"/>
    <property type="evidence" value="ECO:0007669"/>
    <property type="project" value="UniProtKB-SubCell"/>
</dbReference>
<dbReference type="GO" id="GO:0005524">
    <property type="term" value="F:ATP binding"/>
    <property type="evidence" value="ECO:0007669"/>
    <property type="project" value="UniProtKB-UniRule"/>
</dbReference>
<dbReference type="GO" id="GO:0016887">
    <property type="term" value="F:ATP hydrolysis activity"/>
    <property type="evidence" value="ECO:0007669"/>
    <property type="project" value="UniProtKB-UniRule"/>
</dbReference>
<dbReference type="GO" id="GO:0004176">
    <property type="term" value="F:ATP-dependent peptidase activity"/>
    <property type="evidence" value="ECO:0007669"/>
    <property type="project" value="UniProtKB-UniRule"/>
</dbReference>
<dbReference type="GO" id="GO:0043565">
    <property type="term" value="F:sequence-specific DNA binding"/>
    <property type="evidence" value="ECO:0007669"/>
    <property type="project" value="UniProtKB-UniRule"/>
</dbReference>
<dbReference type="GO" id="GO:0004252">
    <property type="term" value="F:serine-type endopeptidase activity"/>
    <property type="evidence" value="ECO:0007669"/>
    <property type="project" value="UniProtKB-UniRule"/>
</dbReference>
<dbReference type="GO" id="GO:0003697">
    <property type="term" value="F:single-stranded DNA binding"/>
    <property type="evidence" value="ECO:0007669"/>
    <property type="project" value="TreeGrafter"/>
</dbReference>
<dbReference type="GO" id="GO:0034599">
    <property type="term" value="P:cellular response to oxidative stress"/>
    <property type="evidence" value="ECO:0007669"/>
    <property type="project" value="UniProtKB-UniRule"/>
</dbReference>
<dbReference type="GO" id="GO:0051131">
    <property type="term" value="P:chaperone-mediated protein complex assembly"/>
    <property type="evidence" value="ECO:0007669"/>
    <property type="project" value="UniProtKB-UniRule"/>
</dbReference>
<dbReference type="GO" id="GO:0035694">
    <property type="term" value="P:mitochondrial protein catabolic process"/>
    <property type="evidence" value="ECO:0007669"/>
    <property type="project" value="EnsemblFungi"/>
</dbReference>
<dbReference type="GO" id="GO:0070407">
    <property type="term" value="P:oxidation-dependent protein catabolic process"/>
    <property type="evidence" value="ECO:0007669"/>
    <property type="project" value="UniProtKB-UniRule"/>
</dbReference>
<dbReference type="GO" id="GO:0006515">
    <property type="term" value="P:protein quality control for misfolded or incompletely synthesized proteins"/>
    <property type="evidence" value="ECO:0007669"/>
    <property type="project" value="UniProtKB-UniRule"/>
</dbReference>
<dbReference type="CDD" id="cd19500">
    <property type="entry name" value="RecA-like_Lon"/>
    <property type="match status" value="1"/>
</dbReference>
<dbReference type="FunFam" id="3.40.50.300:FF:000021">
    <property type="entry name" value="Lon protease homolog"/>
    <property type="match status" value="1"/>
</dbReference>
<dbReference type="FunFam" id="1.10.8.60:FF:000113">
    <property type="entry name" value="Lon protease homolog, mitochondrial"/>
    <property type="match status" value="1"/>
</dbReference>
<dbReference type="FunFam" id="1.20.5.5270:FF:000001">
    <property type="entry name" value="Lon protease homolog, mitochondrial"/>
    <property type="match status" value="1"/>
</dbReference>
<dbReference type="FunFam" id="1.20.58.1480:FF:000003">
    <property type="entry name" value="Lon protease homolog, mitochondrial"/>
    <property type="match status" value="1"/>
</dbReference>
<dbReference type="FunFam" id="2.30.130.40:FF:000006">
    <property type="entry name" value="Lon protease homolog, mitochondrial"/>
    <property type="match status" value="1"/>
</dbReference>
<dbReference type="FunFam" id="3.30.230.10:FF:000015">
    <property type="entry name" value="Lon protease homolog, mitochondrial"/>
    <property type="match status" value="1"/>
</dbReference>
<dbReference type="Gene3D" id="1.10.8.60">
    <property type="match status" value="1"/>
</dbReference>
<dbReference type="Gene3D" id="1.20.5.5270">
    <property type="match status" value="1"/>
</dbReference>
<dbReference type="Gene3D" id="1.20.58.1480">
    <property type="match status" value="1"/>
</dbReference>
<dbReference type="Gene3D" id="3.30.230.10">
    <property type="match status" value="1"/>
</dbReference>
<dbReference type="Gene3D" id="2.30.130.40">
    <property type="entry name" value="LON domain-like"/>
    <property type="match status" value="1"/>
</dbReference>
<dbReference type="Gene3D" id="3.40.50.300">
    <property type="entry name" value="P-loop containing nucleotide triphosphate hydrolases"/>
    <property type="match status" value="1"/>
</dbReference>
<dbReference type="HAMAP" id="MF_03120">
    <property type="entry name" value="lonm_euk"/>
    <property type="match status" value="1"/>
</dbReference>
<dbReference type="InterPro" id="IPR003593">
    <property type="entry name" value="AAA+_ATPase"/>
</dbReference>
<dbReference type="InterPro" id="IPR003959">
    <property type="entry name" value="ATPase_AAA_core"/>
</dbReference>
<dbReference type="InterPro" id="IPR004815">
    <property type="entry name" value="Lon_bac/euk-typ"/>
</dbReference>
<dbReference type="InterPro" id="IPR054594">
    <property type="entry name" value="Lon_lid"/>
</dbReference>
<dbReference type="InterPro" id="IPR008269">
    <property type="entry name" value="Lon_proteolytic"/>
</dbReference>
<dbReference type="InterPro" id="IPR027065">
    <property type="entry name" value="Lon_Prtase"/>
</dbReference>
<dbReference type="InterPro" id="IPR003111">
    <property type="entry name" value="Lon_prtase_N"/>
</dbReference>
<dbReference type="InterPro" id="IPR046336">
    <property type="entry name" value="Lon_prtase_N_sf"/>
</dbReference>
<dbReference type="InterPro" id="IPR027503">
    <property type="entry name" value="Lonm_euk"/>
</dbReference>
<dbReference type="InterPro" id="IPR027417">
    <property type="entry name" value="P-loop_NTPase"/>
</dbReference>
<dbReference type="InterPro" id="IPR008268">
    <property type="entry name" value="Peptidase_S16_AS"/>
</dbReference>
<dbReference type="InterPro" id="IPR015947">
    <property type="entry name" value="PUA-like_sf"/>
</dbReference>
<dbReference type="InterPro" id="IPR020568">
    <property type="entry name" value="Ribosomal_Su5_D2-typ_SF"/>
</dbReference>
<dbReference type="InterPro" id="IPR014721">
    <property type="entry name" value="Ribsml_uS5_D2-typ_fold_subgr"/>
</dbReference>
<dbReference type="NCBIfam" id="TIGR00763">
    <property type="entry name" value="lon"/>
    <property type="match status" value="1"/>
</dbReference>
<dbReference type="PANTHER" id="PTHR43718">
    <property type="entry name" value="LON PROTEASE"/>
    <property type="match status" value="1"/>
</dbReference>
<dbReference type="PANTHER" id="PTHR43718:SF2">
    <property type="entry name" value="LON PROTEASE HOMOLOG, MITOCHONDRIAL"/>
    <property type="match status" value="1"/>
</dbReference>
<dbReference type="Pfam" id="PF00004">
    <property type="entry name" value="AAA"/>
    <property type="match status" value="1"/>
</dbReference>
<dbReference type="Pfam" id="PF05362">
    <property type="entry name" value="Lon_C"/>
    <property type="match status" value="1"/>
</dbReference>
<dbReference type="Pfam" id="PF22667">
    <property type="entry name" value="Lon_lid"/>
    <property type="match status" value="1"/>
</dbReference>
<dbReference type="Pfam" id="PF02190">
    <property type="entry name" value="LON_substr_bdg"/>
    <property type="match status" value="1"/>
</dbReference>
<dbReference type="PRINTS" id="PR00830">
    <property type="entry name" value="ENDOLAPTASE"/>
</dbReference>
<dbReference type="SMART" id="SM00382">
    <property type="entry name" value="AAA"/>
    <property type="match status" value="1"/>
</dbReference>
<dbReference type="SMART" id="SM00464">
    <property type="entry name" value="LON"/>
    <property type="match status" value="1"/>
</dbReference>
<dbReference type="SUPFAM" id="SSF52540">
    <property type="entry name" value="P-loop containing nucleoside triphosphate hydrolases"/>
    <property type="match status" value="1"/>
</dbReference>
<dbReference type="SUPFAM" id="SSF88697">
    <property type="entry name" value="PUA domain-like"/>
    <property type="match status" value="1"/>
</dbReference>
<dbReference type="SUPFAM" id="SSF54211">
    <property type="entry name" value="Ribosomal protein S5 domain 2-like"/>
    <property type="match status" value="1"/>
</dbReference>
<dbReference type="PROSITE" id="PS51787">
    <property type="entry name" value="LON_N"/>
    <property type="match status" value="1"/>
</dbReference>
<dbReference type="PROSITE" id="PS51786">
    <property type="entry name" value="LON_PROTEOLYTIC"/>
    <property type="match status" value="1"/>
</dbReference>
<dbReference type="PROSITE" id="PS01046">
    <property type="entry name" value="LON_SER"/>
    <property type="match status" value="1"/>
</dbReference>
<accession>A2QCJ2</accession>
<name>LONM_ASPNC</name>
<organism>
    <name type="scientific">Aspergillus niger (strain ATCC MYA-4892 / CBS 513.88 / FGSC A1513)</name>
    <dbReference type="NCBI Taxonomy" id="425011"/>
    <lineage>
        <taxon>Eukaryota</taxon>
        <taxon>Fungi</taxon>
        <taxon>Dikarya</taxon>
        <taxon>Ascomycota</taxon>
        <taxon>Pezizomycotina</taxon>
        <taxon>Eurotiomycetes</taxon>
        <taxon>Eurotiomycetidae</taxon>
        <taxon>Eurotiales</taxon>
        <taxon>Aspergillaceae</taxon>
        <taxon>Aspergillus</taxon>
        <taxon>Aspergillus subgen. Circumdati</taxon>
    </lineage>
</organism>
<comment type="function">
    <text evidence="1">ATP-dependent serine protease that mediates the selective degradation of misfolded, unassembled or oxidatively damaged polypeptides as well as certain short-lived regulatory proteins in the mitochondrial matrix. May also have a chaperone function in the assembly of inner membrane protein complexes. Participates in the regulation of mitochondrial gene expression and in the maintenance of the integrity of the mitochondrial genome. Binds to mitochondrial DNA in a site-specific manner.</text>
</comment>
<comment type="catalytic activity">
    <reaction evidence="1">
        <text>Hydrolysis of proteins in presence of ATP.</text>
        <dbReference type="EC" id="3.4.21.53"/>
    </reaction>
</comment>
<comment type="subunit">
    <text evidence="1">Homohexamer or homoheptamer. Organized in a ring with a central cavity.</text>
</comment>
<comment type="subcellular location">
    <subcellularLocation>
        <location evidence="1">Mitochondrion matrix</location>
    </subcellularLocation>
</comment>
<comment type="similarity">
    <text evidence="1">Belongs to the peptidase S16 family.</text>
</comment>
<sequence>MLRGQTLPWRAALQQVSRPFIPRPLLAPSRYNVTARSILNASRLHRSLPTSRAFSSSSIRRREKPPPGDEKDDPAQKEQKDANEEKDVERAPDARRKAADPSGKQGSSHEPGAPTSGFARRKEKAGADKEQRGLEEDSKKDGNAVEGKGNSSDTPSPIPVNGGSDSRPSGANNGGNEDGGKKGKKGSGEKALQKPSVPEVYPQVMAIPIAKRPLFPGFYKAITIRDPNVAAAIQDMMKRGQPYVGAFLFKDENADGDVIENLDDVYDVGVFAQITAAYPLRGEASGVTAVLYPHRRIKVSSLLPPSDAAKAGTTDEKTSERRGDVVASFEEGTAELAPKDHYEPTSFLRKYPVSLVNVENLAEEPYDKKSAIIRAVTSEIVNVCKEIASLNPLFRDQISAFYTDQFPGNLSDEPAKLADFAAAVSAGELNEMQEVLELMNIEERLPKALVVLKKELMNAQLQSKISKDVEAKIQKRQREYWLMEQMKGIKRELGIESDGKDKLVEKFKEKAEKLAMPDAVKKVFDEELNKLAHLEPAASEFNVTRNYLDWLTQIPWGQKSVENFGIQHAVKVLDEDHYGLKDVKDRILEFIAVGKLRGTVEGKILCLVGPPGVGKTSIGKSIARALNRQYYRFSVGGLTDVAEIKGHRRTYVGALPGRIIQALKKCQTENPLILIDEIDKIGRGHQGDPSSALLELLDPEQNSSFLDHYMDVPVDLSKVLFVCTANVTDTIPRPLLDRMELIELSGYVADEKMAIAQRYLAPAARELTGLKEVDVNLTEEAVEELIKSYCRESGVRNLKKQIEKVYRKAAYKIVRDLGEDVLAEEKALTDEGKAVQEESQKETESPDSKSPVDPEKSTTETPRVALKVPESVQLSIGKDSLTDYVGPPIFTADRLYDTFPPGVTMGLAWTSMGGAALYVESILENALTPQSRPGIDITGNLQNVMKESSQIAYSFAKSVMAKQFPENRFFEKAKLHMHCPEGAVPKDGPSAGITMATSLLSLALNHPLDPTIAMTGELTVTGKVLRIGGLREKTVAARRAGAKKIVFPADNMSDWLELPENIKEGIEGHAVGWYSEVFDLLFTDLDKGAANHVWQKQLAEKPEKKSNEVEEDE</sequence>
<proteinExistence type="inferred from homology"/>
<feature type="transit peptide" description="Mitochondrion" evidence="1">
    <location>
        <begin position="1"/>
        <end position="61"/>
    </location>
</feature>
<feature type="chain" id="PRO_0000395773" description="Lon protease homolog, mitochondrial">
    <location>
        <begin position="62"/>
        <end position="1113"/>
    </location>
</feature>
<feature type="domain" description="Lon N-terminal" evidence="3">
    <location>
        <begin position="204"/>
        <end position="456"/>
    </location>
</feature>
<feature type="domain" description="Lon proteolytic" evidence="2">
    <location>
        <begin position="898"/>
        <end position="1084"/>
    </location>
</feature>
<feature type="region of interest" description="Disordered" evidence="4">
    <location>
        <begin position="42"/>
        <end position="196"/>
    </location>
</feature>
<feature type="region of interest" description="Disordered" evidence="4">
    <location>
        <begin position="828"/>
        <end position="864"/>
    </location>
</feature>
<feature type="compositionally biased region" description="Basic and acidic residues" evidence="4">
    <location>
        <begin position="64"/>
        <end position="99"/>
    </location>
</feature>
<feature type="compositionally biased region" description="Basic and acidic residues" evidence="4">
    <location>
        <begin position="124"/>
        <end position="143"/>
    </location>
</feature>
<feature type="compositionally biased region" description="Basic and acidic residues" evidence="4">
    <location>
        <begin position="178"/>
        <end position="192"/>
    </location>
</feature>
<feature type="compositionally biased region" description="Basic and acidic residues" evidence="4">
    <location>
        <begin position="828"/>
        <end position="858"/>
    </location>
</feature>
<feature type="active site" evidence="1">
    <location>
        <position position="990"/>
    </location>
</feature>
<feature type="active site" evidence="1">
    <location>
        <position position="1033"/>
    </location>
</feature>
<feature type="binding site" evidence="1">
    <location>
        <begin position="609"/>
        <end position="616"/>
    </location>
    <ligand>
        <name>ATP</name>
        <dbReference type="ChEBI" id="CHEBI:30616"/>
    </ligand>
</feature>